<keyword id="KW-0007">Acetylation</keyword>
<keyword id="KW-0539">Nucleus</keyword>
<keyword id="KW-0597">Phosphoprotein</keyword>
<keyword id="KW-1185">Reference proteome</keyword>
<name>F118B_MACFA</name>
<feature type="initiator methionine" description="Removed" evidence="1">
    <location>
        <position position="1"/>
    </location>
</feature>
<feature type="chain" id="PRO_0000295104" description="Protein FAM118B">
    <location>
        <begin position="2"/>
        <end position="350"/>
    </location>
</feature>
<feature type="modified residue" description="N-acetylalanine" evidence="1">
    <location>
        <position position="2"/>
    </location>
</feature>
<feature type="modified residue" description="Phosphoserine" evidence="1">
    <location>
        <position position="9"/>
    </location>
</feature>
<comment type="function">
    <text evidence="1">May play a role in Cajal bodies formation.</text>
</comment>
<comment type="subcellular location">
    <subcellularLocation>
        <location evidence="1">Nucleus</location>
        <location evidence="1">Cajal body</location>
    </subcellularLocation>
</comment>
<comment type="similarity">
    <text evidence="2">Belongs to the FAM118 family.</text>
</comment>
<proteinExistence type="evidence at transcript level"/>
<accession>Q4R836</accession>
<sequence>MASTGSQASDIDEIFGFFSDGAPPTKKPRKLLPSLKTKKPRELVLVIGTGISAAVAPQVPALKSWKGLIQALLDAAIDFDLLEDEESKKFQKCLHEDKNLVHVAHDLIQKLSPRTSNVRSTFFKDCLYEVFDDLESKMEDSGKQLLQSVLHLMENGALVLTTNFDNLLELYAADQGKQLESLDLTDEKKVLEWAQEKRKLSVLHIHGVYTNPSGIVLHPAGYQNVLRNTEVMREIQKLYENKSFLFLGCGWTVDDTTFQALFLEAVKHKSDLEHFMLVRRGDVDEFKKLRENMLDKGIKVISYGNDYADLPEYFKRLTCEISTRGRSGMVREGQLNGSSAAHSEIRGCST</sequence>
<reference key="1">
    <citation type="submission" date="2005-06" db="EMBL/GenBank/DDBJ databases">
        <title>DNA sequences of macaque genes expressed in brain or testis and its evolutionary implications.</title>
        <authorList>
            <consortium name="International consortium for macaque cDNA sequencing and analysis"/>
        </authorList>
    </citation>
    <scope>NUCLEOTIDE SEQUENCE [LARGE SCALE MRNA]</scope>
    <source>
        <tissue>Testis</tissue>
    </source>
</reference>
<organism>
    <name type="scientific">Macaca fascicularis</name>
    <name type="common">Crab-eating macaque</name>
    <name type="synonym">Cynomolgus monkey</name>
    <dbReference type="NCBI Taxonomy" id="9541"/>
    <lineage>
        <taxon>Eukaryota</taxon>
        <taxon>Metazoa</taxon>
        <taxon>Chordata</taxon>
        <taxon>Craniata</taxon>
        <taxon>Vertebrata</taxon>
        <taxon>Euteleostomi</taxon>
        <taxon>Mammalia</taxon>
        <taxon>Eutheria</taxon>
        <taxon>Euarchontoglires</taxon>
        <taxon>Primates</taxon>
        <taxon>Haplorrhini</taxon>
        <taxon>Catarrhini</taxon>
        <taxon>Cercopithecidae</taxon>
        <taxon>Cercopithecinae</taxon>
        <taxon>Macaca</taxon>
    </lineage>
</organism>
<evidence type="ECO:0000250" key="1">
    <source>
        <dbReference type="UniProtKB" id="Q9BPY3"/>
    </source>
</evidence>
<evidence type="ECO:0000305" key="2"/>
<dbReference type="EMBL" id="AB168624">
    <property type="protein sequence ID" value="BAE00736.1"/>
    <property type="molecule type" value="mRNA"/>
</dbReference>
<dbReference type="RefSeq" id="NP_001272309.1">
    <property type="nucleotide sequence ID" value="NM_001285380.1"/>
</dbReference>
<dbReference type="RefSeq" id="XP_045225929.1">
    <property type="nucleotide sequence ID" value="XM_045369994.2"/>
</dbReference>
<dbReference type="RefSeq" id="XP_065385745.1">
    <property type="nucleotide sequence ID" value="XM_065529673.1"/>
</dbReference>
<dbReference type="SMR" id="Q4R836"/>
<dbReference type="STRING" id="9541.ENSMFAP00000033025"/>
<dbReference type="GeneID" id="101925118"/>
<dbReference type="VEuPathDB" id="HostDB:ENSMFAG00000003040"/>
<dbReference type="eggNOG" id="ENOG502QSNY">
    <property type="taxonomic scope" value="Eukaryota"/>
</dbReference>
<dbReference type="Proteomes" id="UP000233100">
    <property type="component" value="Chromosome 14"/>
</dbReference>
<dbReference type="GO" id="GO:0015030">
    <property type="term" value="C:Cajal body"/>
    <property type="evidence" value="ECO:0007669"/>
    <property type="project" value="UniProtKB-SubCell"/>
</dbReference>
<dbReference type="InterPro" id="IPR038916">
    <property type="entry name" value="FAM118"/>
</dbReference>
<dbReference type="PANTHER" id="PTHR28623">
    <property type="entry name" value="PROTEIN FAM118B"/>
    <property type="match status" value="1"/>
</dbReference>
<dbReference type="PANTHER" id="PTHR28623:SF1">
    <property type="entry name" value="PROTEIN FAM118B"/>
    <property type="match status" value="1"/>
</dbReference>
<dbReference type="Pfam" id="PF13289">
    <property type="entry name" value="SIR2_2"/>
    <property type="match status" value="1"/>
</dbReference>
<gene>
    <name type="primary">FAM118B</name>
    <name type="ORF">QtsA-13586</name>
</gene>
<protein>
    <recommendedName>
        <fullName>Protein FAM118B</fullName>
    </recommendedName>
</protein>